<evidence type="ECO:0000255" key="1"/>
<evidence type="ECO:0000255" key="2">
    <source>
        <dbReference type="PROSITE-ProRule" id="PRU00498"/>
    </source>
</evidence>
<evidence type="ECO:0000256" key="3">
    <source>
        <dbReference type="SAM" id="MobiDB-lite"/>
    </source>
</evidence>
<evidence type="ECO:0000269" key="4">
    <source>
    </source>
</evidence>
<evidence type="ECO:0000303" key="5">
    <source>
    </source>
</evidence>
<evidence type="ECO:0000305" key="6"/>
<accession>A0A8K1AW52</accession>
<reference key="1">
    <citation type="journal article" date="2022" name="Org. Lett.">
        <title>Identification and characterization of a cryptic bifunctional type I diterpene synthase involved in talaronoid biosynthesis from a marine-derived fungus.</title>
        <authorList>
            <person name="Zhang P."/>
            <person name="Wu G."/>
            <person name="Heard S.C."/>
            <person name="Niu C."/>
            <person name="Bell S.A."/>
            <person name="Li F."/>
            <person name="Ye Y."/>
            <person name="Zhang Y."/>
            <person name="Winter J.M."/>
        </authorList>
    </citation>
    <scope>NUCLEOTIDE SEQUENCE [GENOMIC DNA]</scope>
    <scope>FUNCTION</scope>
    <source>
        <strain>CNL-338</strain>
    </source>
</reference>
<keyword id="KW-0325">Glycoprotein</keyword>
<keyword id="KW-0472">Membrane</keyword>
<keyword id="KW-0812">Transmembrane</keyword>
<keyword id="KW-1133">Transmembrane helix</keyword>
<keyword id="KW-0813">Transport</keyword>
<dbReference type="EMBL" id="MW248390">
    <property type="protein sequence ID" value="QVR97763.1"/>
    <property type="molecule type" value="Genomic_DNA"/>
</dbReference>
<dbReference type="SMR" id="A0A8K1AW52"/>
<dbReference type="GO" id="GO:0016020">
    <property type="term" value="C:membrane"/>
    <property type="evidence" value="ECO:0007669"/>
    <property type="project" value="UniProtKB-SubCell"/>
</dbReference>
<dbReference type="GO" id="GO:0022857">
    <property type="term" value="F:transmembrane transporter activity"/>
    <property type="evidence" value="ECO:0007669"/>
    <property type="project" value="InterPro"/>
</dbReference>
<dbReference type="CDD" id="cd17323">
    <property type="entry name" value="MFS_Tpo1_MDR_like"/>
    <property type="match status" value="1"/>
</dbReference>
<dbReference type="FunFam" id="1.20.1250.20:FF:000011">
    <property type="entry name" value="MFS multidrug transporter, putative"/>
    <property type="match status" value="1"/>
</dbReference>
<dbReference type="Gene3D" id="1.20.1250.20">
    <property type="entry name" value="MFS general substrate transporter like domains"/>
    <property type="match status" value="1"/>
</dbReference>
<dbReference type="InterPro" id="IPR011701">
    <property type="entry name" value="MFS"/>
</dbReference>
<dbReference type="InterPro" id="IPR020846">
    <property type="entry name" value="MFS_dom"/>
</dbReference>
<dbReference type="InterPro" id="IPR036259">
    <property type="entry name" value="MFS_trans_sf"/>
</dbReference>
<dbReference type="PANTHER" id="PTHR23502">
    <property type="entry name" value="MAJOR FACILITATOR SUPERFAMILY"/>
    <property type="match status" value="1"/>
</dbReference>
<dbReference type="PANTHER" id="PTHR23502:SF68">
    <property type="entry name" value="MULTIDRUG TRANSPORTER, PUTATIVE (AFU_ORTHOLOGUE AFUA_3G01120)-RELATED"/>
    <property type="match status" value="1"/>
</dbReference>
<dbReference type="Pfam" id="PF07690">
    <property type="entry name" value="MFS_1"/>
    <property type="match status" value="1"/>
</dbReference>
<dbReference type="SUPFAM" id="SSF103473">
    <property type="entry name" value="MFS general substrate transporter"/>
    <property type="match status" value="1"/>
</dbReference>
<dbReference type="PROSITE" id="PS50850">
    <property type="entry name" value="MFS"/>
    <property type="match status" value="1"/>
</dbReference>
<sequence length="538" mass="57725">MSLSGSDSHLAVSPTLAEDMNSSDTSAGLAETPPADEEKRSIVDTGESVVAMNEPHIVDWDGPDDPGNPVNFSRHIKITNVGIVSALTFITPLASSMFAPGVPQLMEEFHSSSRLLAGFVVSVYVLGFAIGPLILAPASELLGRVPIYHICNICFTVFSIACALSTNLGMLIAFRFFQGCFGSAPVTNGGGTIADLIVQEKRGGVIAIYALGPLLGPVIGPVAGGYLAAARGWRWVFWVLAIVGGGCTLASFLFLRETYPMVLLKRKTQRLIQETGNTHLRSKNDNGMSTRQRFVQAIVRPSRILFRSPIVAASSVYVGIVYGYQYLMFSTFTYVFEDQYAFPTSSAGLTFLGTGVGSLLGLFVIGAVSDRILKAKSKPTPEAPSGAMKPEYRLPPLVWGAFFIPAGLFMYGWSAYYRTHWIVPIIGTGLVGIGNIAVFMCITSYLVDAFTIFAASALAANTVVRSILGALLPMAGQSMYDSMGLGWGNSLLGFIAVVCIPIPWAMMRYGERMREAFDGATIFTIFSGSVSVTRSTFT</sequence>
<name>TNDD_ASPFV</name>
<protein>
    <recommendedName>
        <fullName evidence="5">MFS-type transporter tndD</fullName>
    </recommendedName>
    <alternativeName>
        <fullName evidence="5">Talaronoid C biosynthesis cluster protein D</fullName>
    </alternativeName>
</protein>
<comment type="function">
    <text evidence="4">MFS-type transporter; part of the gene cluster that mediates the biosynthesis of talaronoid C, a fusicoccane diterpenoid with an unprecedented tricyclic 5/8/6 ring system.</text>
</comment>
<comment type="subcellular location">
    <subcellularLocation>
        <location evidence="1">Membrane</location>
        <topology evidence="1">Multi-pass membrane protein</topology>
    </subcellularLocation>
</comment>
<comment type="similarity">
    <text evidence="6">Belongs to the major facilitator superfamily.</text>
</comment>
<organism>
    <name type="scientific">Aspergillus flavipes</name>
    <dbReference type="NCBI Taxonomy" id="41900"/>
    <lineage>
        <taxon>Eukaryota</taxon>
        <taxon>Fungi</taxon>
        <taxon>Dikarya</taxon>
        <taxon>Ascomycota</taxon>
        <taxon>Pezizomycotina</taxon>
        <taxon>Eurotiomycetes</taxon>
        <taxon>Eurotiomycetidae</taxon>
        <taxon>Eurotiales</taxon>
        <taxon>Aspergillaceae</taxon>
        <taxon>Aspergillus</taxon>
        <taxon>Aspergillus subgen. Circumdati</taxon>
    </lineage>
</organism>
<feature type="chain" id="PRO_0000457142" description="MFS-type transporter tndD">
    <location>
        <begin position="1"/>
        <end position="538"/>
    </location>
</feature>
<feature type="transmembrane region" description="Helical" evidence="1">
    <location>
        <begin position="81"/>
        <end position="101"/>
    </location>
</feature>
<feature type="transmembrane region" description="Helical" evidence="1">
    <location>
        <begin position="115"/>
        <end position="135"/>
    </location>
</feature>
<feature type="transmembrane region" description="Helical" evidence="1">
    <location>
        <begin position="153"/>
        <end position="173"/>
    </location>
</feature>
<feature type="transmembrane region" description="Helical" evidence="1">
    <location>
        <begin position="203"/>
        <end position="223"/>
    </location>
</feature>
<feature type="transmembrane region" description="Helical" evidence="1">
    <location>
        <begin position="235"/>
        <end position="255"/>
    </location>
</feature>
<feature type="transmembrane region" description="Helical" evidence="1">
    <location>
        <begin position="309"/>
        <end position="329"/>
    </location>
</feature>
<feature type="transmembrane region" description="Helical" evidence="1">
    <location>
        <begin position="348"/>
        <end position="368"/>
    </location>
</feature>
<feature type="transmembrane region" description="Helical" evidence="1">
    <location>
        <begin position="394"/>
        <end position="414"/>
    </location>
</feature>
<feature type="transmembrane region" description="Helical" evidence="1">
    <location>
        <begin position="422"/>
        <end position="442"/>
    </location>
</feature>
<feature type="transmembrane region" description="Helical" evidence="1">
    <location>
        <begin position="444"/>
        <end position="464"/>
    </location>
</feature>
<feature type="transmembrane region" description="Helical" evidence="1">
    <location>
        <begin position="485"/>
        <end position="505"/>
    </location>
</feature>
<feature type="region of interest" description="Disordered" evidence="3">
    <location>
        <begin position="1"/>
        <end position="42"/>
    </location>
</feature>
<feature type="glycosylation site" description="N-linked (GlcNAc...) asparagine" evidence="2">
    <location>
        <position position="21"/>
    </location>
</feature>
<feature type="glycosylation site" description="N-linked (GlcNAc...) asparagine" evidence="2">
    <location>
        <position position="71"/>
    </location>
</feature>
<gene>
    <name evidence="5" type="primary">tndD</name>
</gene>
<proteinExistence type="inferred from homology"/>